<sequence>MIAIYPGSFDPITLGHLDIIERGGQLFDLVIVTVLRNPNKQPLFSVEKRVEQIRECTQHLSNVEVDSFTGLTVEYAKLRNAKVLLRGLRVLSDFEKELQMAHTNVTLWDGIETVFLATAKEYSFLSSSIVKEIAKFGGSISHLVPKNVAQDITLYYS</sequence>
<reference key="1">
    <citation type="journal article" date="2011" name="MBio">
        <title>Novel metabolic attributes of the genus Cyanothece, comprising a group of unicellular nitrogen-fixing Cyanobacteria.</title>
        <authorList>
            <person name="Bandyopadhyay A."/>
            <person name="Elvitigala T."/>
            <person name="Welsh E."/>
            <person name="Stockel J."/>
            <person name="Liberton M."/>
            <person name="Min H."/>
            <person name="Sherman L.A."/>
            <person name="Pakrasi H.B."/>
        </authorList>
    </citation>
    <scope>NUCLEOTIDE SEQUENCE [LARGE SCALE GENOMIC DNA]</scope>
    <source>
        <strain>PCC 7424</strain>
    </source>
</reference>
<organism>
    <name type="scientific">Gloeothece citriformis (strain PCC 7424)</name>
    <name type="common">Cyanothece sp. (strain PCC 7424)</name>
    <dbReference type="NCBI Taxonomy" id="65393"/>
    <lineage>
        <taxon>Bacteria</taxon>
        <taxon>Bacillati</taxon>
        <taxon>Cyanobacteriota</taxon>
        <taxon>Cyanophyceae</taxon>
        <taxon>Oscillatoriophycideae</taxon>
        <taxon>Chroococcales</taxon>
        <taxon>Aphanothecaceae</taxon>
        <taxon>Gloeothece</taxon>
        <taxon>Gloeothece citriformis</taxon>
    </lineage>
</organism>
<gene>
    <name evidence="1" type="primary">coaD</name>
    <name type="ordered locus">PCC7424_1994</name>
</gene>
<evidence type="ECO:0000255" key="1">
    <source>
        <dbReference type="HAMAP-Rule" id="MF_00151"/>
    </source>
</evidence>
<protein>
    <recommendedName>
        <fullName evidence="1">Phosphopantetheine adenylyltransferase</fullName>
        <ecNumber evidence="1">2.7.7.3</ecNumber>
    </recommendedName>
    <alternativeName>
        <fullName evidence="1">Dephospho-CoA pyrophosphorylase</fullName>
    </alternativeName>
    <alternativeName>
        <fullName evidence="1">Pantetheine-phosphate adenylyltransferase</fullName>
        <shortName evidence="1">PPAT</shortName>
    </alternativeName>
</protein>
<proteinExistence type="inferred from homology"/>
<name>COAD_GLOC7</name>
<feature type="chain" id="PRO_1000118072" description="Phosphopantetheine adenylyltransferase">
    <location>
        <begin position="1"/>
        <end position="157"/>
    </location>
</feature>
<feature type="binding site" evidence="1">
    <location>
        <begin position="8"/>
        <end position="9"/>
    </location>
    <ligand>
        <name>ATP</name>
        <dbReference type="ChEBI" id="CHEBI:30616"/>
    </ligand>
</feature>
<feature type="binding site" evidence="1">
    <location>
        <position position="8"/>
    </location>
    <ligand>
        <name>substrate</name>
    </ligand>
</feature>
<feature type="binding site" evidence="1">
    <location>
        <position position="16"/>
    </location>
    <ligand>
        <name>ATP</name>
        <dbReference type="ChEBI" id="CHEBI:30616"/>
    </ligand>
</feature>
<feature type="binding site" evidence="1">
    <location>
        <position position="40"/>
    </location>
    <ligand>
        <name>substrate</name>
    </ligand>
</feature>
<feature type="binding site" evidence="1">
    <location>
        <position position="72"/>
    </location>
    <ligand>
        <name>substrate</name>
    </ligand>
</feature>
<feature type="binding site" evidence="1">
    <location>
        <position position="86"/>
    </location>
    <ligand>
        <name>substrate</name>
    </ligand>
</feature>
<feature type="binding site" evidence="1">
    <location>
        <begin position="87"/>
        <end position="89"/>
    </location>
    <ligand>
        <name>ATP</name>
        <dbReference type="ChEBI" id="CHEBI:30616"/>
    </ligand>
</feature>
<feature type="binding site" evidence="1">
    <location>
        <position position="97"/>
    </location>
    <ligand>
        <name>ATP</name>
        <dbReference type="ChEBI" id="CHEBI:30616"/>
    </ligand>
</feature>
<feature type="binding site" evidence="1">
    <location>
        <begin position="122"/>
        <end position="128"/>
    </location>
    <ligand>
        <name>ATP</name>
        <dbReference type="ChEBI" id="CHEBI:30616"/>
    </ligand>
</feature>
<feature type="site" description="Transition state stabilizer" evidence="1">
    <location>
        <position position="16"/>
    </location>
</feature>
<comment type="function">
    <text evidence="1">Reversibly transfers an adenylyl group from ATP to 4'-phosphopantetheine, yielding dephospho-CoA (dPCoA) and pyrophosphate.</text>
</comment>
<comment type="catalytic activity">
    <reaction evidence="1">
        <text>(R)-4'-phosphopantetheine + ATP + H(+) = 3'-dephospho-CoA + diphosphate</text>
        <dbReference type="Rhea" id="RHEA:19801"/>
        <dbReference type="ChEBI" id="CHEBI:15378"/>
        <dbReference type="ChEBI" id="CHEBI:30616"/>
        <dbReference type="ChEBI" id="CHEBI:33019"/>
        <dbReference type="ChEBI" id="CHEBI:57328"/>
        <dbReference type="ChEBI" id="CHEBI:61723"/>
        <dbReference type="EC" id="2.7.7.3"/>
    </reaction>
</comment>
<comment type="cofactor">
    <cofactor evidence="1">
        <name>Mg(2+)</name>
        <dbReference type="ChEBI" id="CHEBI:18420"/>
    </cofactor>
</comment>
<comment type="pathway">
    <text evidence="1">Cofactor biosynthesis; coenzyme A biosynthesis; CoA from (R)-pantothenate: step 4/5.</text>
</comment>
<comment type="subunit">
    <text evidence="1">Homohexamer.</text>
</comment>
<comment type="subcellular location">
    <subcellularLocation>
        <location evidence="1">Cytoplasm</location>
    </subcellularLocation>
</comment>
<comment type="similarity">
    <text evidence="1">Belongs to the bacterial CoaD family.</text>
</comment>
<accession>B7KEW8</accession>
<keyword id="KW-0067">ATP-binding</keyword>
<keyword id="KW-0173">Coenzyme A biosynthesis</keyword>
<keyword id="KW-0963">Cytoplasm</keyword>
<keyword id="KW-0460">Magnesium</keyword>
<keyword id="KW-0547">Nucleotide-binding</keyword>
<keyword id="KW-0548">Nucleotidyltransferase</keyword>
<keyword id="KW-1185">Reference proteome</keyword>
<keyword id="KW-0808">Transferase</keyword>
<dbReference type="EC" id="2.7.7.3" evidence="1"/>
<dbReference type="EMBL" id="CP001291">
    <property type="protein sequence ID" value="ACK70424.1"/>
    <property type="molecule type" value="Genomic_DNA"/>
</dbReference>
<dbReference type="RefSeq" id="WP_015954030.1">
    <property type="nucleotide sequence ID" value="NC_011729.1"/>
</dbReference>
<dbReference type="SMR" id="B7KEW8"/>
<dbReference type="STRING" id="65393.PCC7424_1994"/>
<dbReference type="KEGG" id="cyc:PCC7424_1994"/>
<dbReference type="eggNOG" id="COG0669">
    <property type="taxonomic scope" value="Bacteria"/>
</dbReference>
<dbReference type="HOGENOM" id="CLU_100149_0_1_3"/>
<dbReference type="OrthoDB" id="9806661at2"/>
<dbReference type="UniPathway" id="UPA00241">
    <property type="reaction ID" value="UER00355"/>
</dbReference>
<dbReference type="Proteomes" id="UP000002384">
    <property type="component" value="Chromosome"/>
</dbReference>
<dbReference type="GO" id="GO:0005737">
    <property type="term" value="C:cytoplasm"/>
    <property type="evidence" value="ECO:0007669"/>
    <property type="project" value="UniProtKB-SubCell"/>
</dbReference>
<dbReference type="GO" id="GO:0005524">
    <property type="term" value="F:ATP binding"/>
    <property type="evidence" value="ECO:0007669"/>
    <property type="project" value="UniProtKB-KW"/>
</dbReference>
<dbReference type="GO" id="GO:0004595">
    <property type="term" value="F:pantetheine-phosphate adenylyltransferase activity"/>
    <property type="evidence" value="ECO:0007669"/>
    <property type="project" value="UniProtKB-UniRule"/>
</dbReference>
<dbReference type="GO" id="GO:0015937">
    <property type="term" value="P:coenzyme A biosynthetic process"/>
    <property type="evidence" value="ECO:0007669"/>
    <property type="project" value="UniProtKB-UniRule"/>
</dbReference>
<dbReference type="CDD" id="cd02163">
    <property type="entry name" value="PPAT"/>
    <property type="match status" value="1"/>
</dbReference>
<dbReference type="Gene3D" id="3.40.50.620">
    <property type="entry name" value="HUPs"/>
    <property type="match status" value="1"/>
</dbReference>
<dbReference type="HAMAP" id="MF_00151">
    <property type="entry name" value="PPAT_bact"/>
    <property type="match status" value="1"/>
</dbReference>
<dbReference type="InterPro" id="IPR004821">
    <property type="entry name" value="Cyt_trans-like"/>
</dbReference>
<dbReference type="InterPro" id="IPR001980">
    <property type="entry name" value="PPAT"/>
</dbReference>
<dbReference type="InterPro" id="IPR014729">
    <property type="entry name" value="Rossmann-like_a/b/a_fold"/>
</dbReference>
<dbReference type="NCBIfam" id="TIGR01510">
    <property type="entry name" value="coaD_prev_kdtB"/>
    <property type="match status" value="1"/>
</dbReference>
<dbReference type="NCBIfam" id="TIGR00125">
    <property type="entry name" value="cyt_tran_rel"/>
    <property type="match status" value="1"/>
</dbReference>
<dbReference type="PANTHER" id="PTHR21342">
    <property type="entry name" value="PHOSPHOPANTETHEINE ADENYLYLTRANSFERASE"/>
    <property type="match status" value="1"/>
</dbReference>
<dbReference type="PANTHER" id="PTHR21342:SF1">
    <property type="entry name" value="PHOSPHOPANTETHEINE ADENYLYLTRANSFERASE"/>
    <property type="match status" value="1"/>
</dbReference>
<dbReference type="Pfam" id="PF01467">
    <property type="entry name" value="CTP_transf_like"/>
    <property type="match status" value="1"/>
</dbReference>
<dbReference type="PRINTS" id="PR01020">
    <property type="entry name" value="LPSBIOSNTHSS"/>
</dbReference>
<dbReference type="SUPFAM" id="SSF52374">
    <property type="entry name" value="Nucleotidylyl transferase"/>
    <property type="match status" value="1"/>
</dbReference>